<organism>
    <name type="scientific">Bradyrhizobium diazoefficiens (strain JCM 10833 / BCRC 13528 / IAM 13628 / NBRC 14792 / USDA 110)</name>
    <dbReference type="NCBI Taxonomy" id="224911"/>
    <lineage>
        <taxon>Bacteria</taxon>
        <taxon>Pseudomonadati</taxon>
        <taxon>Pseudomonadota</taxon>
        <taxon>Alphaproteobacteria</taxon>
        <taxon>Hyphomicrobiales</taxon>
        <taxon>Nitrobacteraceae</taxon>
        <taxon>Bradyrhizobium</taxon>
    </lineage>
</organism>
<name>KUP3_BRADU</name>
<reference key="1">
    <citation type="journal article" date="2002" name="DNA Res.">
        <title>Complete genomic sequence of nitrogen-fixing symbiotic bacterium Bradyrhizobium japonicum USDA110.</title>
        <authorList>
            <person name="Kaneko T."/>
            <person name="Nakamura Y."/>
            <person name="Sato S."/>
            <person name="Minamisawa K."/>
            <person name="Uchiumi T."/>
            <person name="Sasamoto S."/>
            <person name="Watanabe A."/>
            <person name="Idesawa K."/>
            <person name="Iriguchi M."/>
            <person name="Kawashima K."/>
            <person name="Kohara M."/>
            <person name="Matsumoto M."/>
            <person name="Shimpo S."/>
            <person name="Tsuruoka H."/>
            <person name="Wada T."/>
            <person name="Yamada M."/>
            <person name="Tabata S."/>
        </authorList>
    </citation>
    <scope>NUCLEOTIDE SEQUENCE [LARGE SCALE GENOMIC DNA]</scope>
    <source>
        <strain>JCM 10833 / BCRC 13528 / IAM 13628 / NBRC 14792 / USDA 110</strain>
    </source>
</reference>
<keyword id="KW-0997">Cell inner membrane</keyword>
<keyword id="KW-1003">Cell membrane</keyword>
<keyword id="KW-0406">Ion transport</keyword>
<keyword id="KW-0472">Membrane</keyword>
<keyword id="KW-0630">Potassium</keyword>
<keyword id="KW-0633">Potassium transport</keyword>
<keyword id="KW-1185">Reference proteome</keyword>
<keyword id="KW-0769">Symport</keyword>
<keyword id="KW-0812">Transmembrane</keyword>
<keyword id="KW-1133">Transmembrane helix</keyword>
<keyword id="KW-0813">Transport</keyword>
<protein>
    <recommendedName>
        <fullName evidence="1">Probable potassium transport system protein Kup 3</fullName>
    </recommendedName>
</protein>
<feature type="chain" id="PRO_0000209000" description="Probable potassium transport system protein Kup 3">
    <location>
        <begin position="1"/>
        <end position="617"/>
    </location>
</feature>
<feature type="transmembrane region" description="Helical" evidence="1">
    <location>
        <begin position="42"/>
        <end position="62"/>
    </location>
</feature>
<feature type="transmembrane region" description="Helical" evidence="1">
    <location>
        <begin position="95"/>
        <end position="115"/>
    </location>
</feature>
<feature type="transmembrane region" description="Helical" evidence="1">
    <location>
        <begin position="129"/>
        <end position="149"/>
    </location>
</feature>
<feature type="transmembrane region" description="Helical" evidence="1">
    <location>
        <begin position="160"/>
        <end position="180"/>
    </location>
</feature>
<feature type="transmembrane region" description="Helical" evidence="1">
    <location>
        <begin position="206"/>
        <end position="226"/>
    </location>
</feature>
<feature type="transmembrane region" description="Helical" evidence="1">
    <location>
        <begin position="240"/>
        <end position="260"/>
    </location>
</feature>
<feature type="transmembrane region" description="Helical" evidence="1">
    <location>
        <begin position="282"/>
        <end position="302"/>
    </location>
</feature>
<feature type="transmembrane region" description="Helical" evidence="1">
    <location>
        <begin position="330"/>
        <end position="350"/>
    </location>
</feature>
<feature type="transmembrane region" description="Helical" evidence="1">
    <location>
        <begin position="360"/>
        <end position="380"/>
    </location>
</feature>
<feature type="transmembrane region" description="Helical" evidence="1">
    <location>
        <begin position="386"/>
        <end position="406"/>
    </location>
</feature>
<feature type="transmembrane region" description="Helical" evidence="1">
    <location>
        <begin position="411"/>
        <end position="431"/>
    </location>
</feature>
<dbReference type="EMBL" id="BA000040">
    <property type="protein sequence ID" value="BAC49960.1"/>
    <property type="molecule type" value="Genomic_DNA"/>
</dbReference>
<dbReference type="RefSeq" id="NP_771335.1">
    <property type="nucleotide sequence ID" value="NC_004463.1"/>
</dbReference>
<dbReference type="RefSeq" id="WP_011087463.1">
    <property type="nucleotide sequence ID" value="NC_004463.1"/>
</dbReference>
<dbReference type="SMR" id="Q89L53"/>
<dbReference type="STRING" id="224911.AAV28_20770"/>
<dbReference type="EnsemblBacteria" id="BAC49960">
    <property type="protein sequence ID" value="BAC49960"/>
    <property type="gene ID" value="BAC49960"/>
</dbReference>
<dbReference type="GeneID" id="46491705"/>
<dbReference type="KEGG" id="bja:blr4695"/>
<dbReference type="PATRIC" id="fig|224911.44.peg.4523"/>
<dbReference type="eggNOG" id="COG3158">
    <property type="taxonomic scope" value="Bacteria"/>
</dbReference>
<dbReference type="HOGENOM" id="CLU_008142_4_2_5"/>
<dbReference type="InParanoid" id="Q89L53"/>
<dbReference type="OrthoDB" id="9805577at2"/>
<dbReference type="PhylomeDB" id="Q89L53"/>
<dbReference type="Proteomes" id="UP000002526">
    <property type="component" value="Chromosome"/>
</dbReference>
<dbReference type="GO" id="GO:0016020">
    <property type="term" value="C:membrane"/>
    <property type="evidence" value="ECO:0000318"/>
    <property type="project" value="GO_Central"/>
</dbReference>
<dbReference type="GO" id="GO:0005886">
    <property type="term" value="C:plasma membrane"/>
    <property type="evidence" value="ECO:0007669"/>
    <property type="project" value="UniProtKB-SubCell"/>
</dbReference>
<dbReference type="GO" id="GO:0015079">
    <property type="term" value="F:potassium ion transmembrane transporter activity"/>
    <property type="evidence" value="ECO:0000318"/>
    <property type="project" value="GO_Central"/>
</dbReference>
<dbReference type="GO" id="GO:0015293">
    <property type="term" value="F:symporter activity"/>
    <property type="evidence" value="ECO:0007669"/>
    <property type="project" value="UniProtKB-UniRule"/>
</dbReference>
<dbReference type="GO" id="GO:0006813">
    <property type="term" value="P:potassium ion transport"/>
    <property type="evidence" value="ECO:0000318"/>
    <property type="project" value="GO_Central"/>
</dbReference>
<dbReference type="HAMAP" id="MF_01522">
    <property type="entry name" value="Kup"/>
    <property type="match status" value="1"/>
</dbReference>
<dbReference type="InterPro" id="IPR003855">
    <property type="entry name" value="K+_transporter"/>
</dbReference>
<dbReference type="InterPro" id="IPR053952">
    <property type="entry name" value="K_trans_C"/>
</dbReference>
<dbReference type="InterPro" id="IPR053951">
    <property type="entry name" value="K_trans_N"/>
</dbReference>
<dbReference type="InterPro" id="IPR023051">
    <property type="entry name" value="Kup"/>
</dbReference>
<dbReference type="PANTHER" id="PTHR30540:SF79">
    <property type="entry name" value="LOW AFFINITY POTASSIUM TRANSPORT SYSTEM PROTEIN KUP"/>
    <property type="match status" value="1"/>
</dbReference>
<dbReference type="PANTHER" id="PTHR30540">
    <property type="entry name" value="OSMOTIC STRESS POTASSIUM TRANSPORTER"/>
    <property type="match status" value="1"/>
</dbReference>
<dbReference type="Pfam" id="PF02705">
    <property type="entry name" value="K_trans"/>
    <property type="match status" value="1"/>
</dbReference>
<dbReference type="Pfam" id="PF22776">
    <property type="entry name" value="K_trans_C"/>
    <property type="match status" value="1"/>
</dbReference>
<comment type="function">
    <text evidence="1">Transport of potassium into the cell. Likely operates as a K(+):H(+) symporter.</text>
</comment>
<comment type="catalytic activity">
    <reaction evidence="1">
        <text>K(+)(in) + H(+)(in) = K(+)(out) + H(+)(out)</text>
        <dbReference type="Rhea" id="RHEA:28490"/>
        <dbReference type="ChEBI" id="CHEBI:15378"/>
        <dbReference type="ChEBI" id="CHEBI:29103"/>
    </reaction>
    <physiologicalReaction direction="right-to-left" evidence="1">
        <dbReference type="Rhea" id="RHEA:28492"/>
    </physiologicalReaction>
</comment>
<comment type="subcellular location">
    <subcellularLocation>
        <location evidence="1">Cell inner membrane</location>
        <topology evidence="1">Multi-pass membrane protein</topology>
    </subcellularLocation>
</comment>
<comment type="similarity">
    <text evidence="1">Belongs to the HAK/KUP transporter (TC 2.A.72) family.</text>
</comment>
<proteinExistence type="inferred from homology"/>
<sequence>MTMGALGVVYGDIGTSPLYALKEAAKAAAHGATVTPDAVLGVASLILWALLLIISLKYALLILRADNRGEGGIVALLALLHARNAQPGTWRSHLLVVGLVGAALLYGDGAITPAISVLSAIEGLKVDAPSLAPAVVPVTVVILVGLFMMQKQGTGFIGRIFGPVMLAWFAVLAALGIHGIVKAPAVLAALSPLYAVEFLIHQDFHVSFAILGAAFLAVTGGEAMYADMGHFGRLPIRLAWFAICLPALVLNYFGQAALLITDPAMIENPFFQLCPDALHYPLVAFSAVATVIASQAIISGVFSLTQQSIQLGFLPRMQIRHTTSDAIGQIYVPLVNWLLAAATLGAVLSFGSSDALAGAYGIAVSLLMAITTLLAALVAIQWGYSPWLVVAVNGAFFVIDVIFFSANSIKLFEGGWFPLLLAALVAFMMLTWRSGVKLVEAARAKLRQPEEDLIETAVNKCSARLPGTAVFLASAPRGVPLALTQFVKHNRVLHERVLLVTVLIEESPHIPDEERAEVIEIIPGITRVILHYGFMQNPTIFDGLTLTCRQGKLPGIDLSDITYYVGRETIIPREDVPGMWVWREGLFAFLQRNAERSAAFFGVPTKQVVEFGTELEI</sequence>
<evidence type="ECO:0000255" key="1">
    <source>
        <dbReference type="HAMAP-Rule" id="MF_01522"/>
    </source>
</evidence>
<accession>Q89L53</accession>
<gene>
    <name evidence="1" type="primary">kup3</name>
    <name type="ordered locus">blr4695</name>
</gene>